<reference key="1">
    <citation type="journal article" date="1995" name="J. Immunol.">
        <title>Comparative sequence analysis of cytokine genes from human and nonhuman primates.</title>
        <authorList>
            <person name="Villinger F.J."/>
            <person name="Brar S.S."/>
            <person name="Mayne A.E."/>
            <person name="Chikkala N."/>
            <person name="Ansari A.A."/>
        </authorList>
    </citation>
    <scope>NUCLEOTIDE SEQUENCE [MRNA]</scope>
</reference>
<reference key="2">
    <citation type="journal article" date="2004" name="Mol. Biol. Evol.">
        <title>Rhesus macaque class I duplicon structures, organization, and evolution within the alpha block of the major histocompatibility complex.</title>
        <authorList>
            <person name="Kulski J.K."/>
            <person name="Anzai T."/>
            <person name="Shiina T."/>
            <person name="Inoko H."/>
        </authorList>
    </citation>
    <scope>NUCLEOTIDE SEQUENCE [LARGE SCALE GENOMIC DNA]</scope>
</reference>
<reference key="3">
    <citation type="submission" date="2002-03" db="EMBL/GenBank/DDBJ databases">
        <title>Molecular evolution in higher primates; gene specific and organism specific characteristics.</title>
        <authorList>
            <person name="O'Huigin C."/>
            <person name="Tichy H."/>
            <person name="Klein J."/>
        </authorList>
    </citation>
    <scope>NUCLEOTIDE SEQUENCE [GENOMIC DNA] OF 33-187</scope>
</reference>
<organism>
    <name type="scientific">Macaca mulatta</name>
    <name type="common">Rhesus macaque</name>
    <dbReference type="NCBI Taxonomy" id="9544"/>
    <lineage>
        <taxon>Eukaryota</taxon>
        <taxon>Metazoa</taxon>
        <taxon>Chordata</taxon>
        <taxon>Craniata</taxon>
        <taxon>Vertebrata</taxon>
        <taxon>Euteleostomi</taxon>
        <taxon>Mammalia</taxon>
        <taxon>Eutheria</taxon>
        <taxon>Euarchontoglires</taxon>
        <taxon>Primates</taxon>
        <taxon>Haplorrhini</taxon>
        <taxon>Catarrhini</taxon>
        <taxon>Cercopithecidae</taxon>
        <taxon>Cercopithecinae</taxon>
        <taxon>Macaca</taxon>
    </lineage>
</organism>
<feature type="chain" id="PRO_0000034431" description="Tumor necrosis factor, membrane form">
    <location>
        <begin position="1"/>
        <end position="233"/>
    </location>
</feature>
<feature type="chain" id="PRO_0000417247" description="Intracellular domain 1" evidence="1">
    <location>
        <begin position="1"/>
        <end position="39"/>
    </location>
</feature>
<feature type="chain" id="PRO_0000417248" description="Intracellular domain 2" evidence="1">
    <location>
        <begin position="1"/>
        <end position="35"/>
    </location>
</feature>
<feature type="chain" id="PRO_0000417249" description="C-domain 1" evidence="1">
    <location>
        <begin position="50"/>
        <end status="unknown"/>
    </location>
</feature>
<feature type="chain" id="PRO_0000417250" description="C-domain 2" evidence="1">
    <location>
        <begin position="52"/>
        <end status="unknown"/>
    </location>
</feature>
<feature type="chain" id="PRO_0000034432" description="Tumor necrosis factor, soluble form">
    <location>
        <begin position="77"/>
        <end position="233"/>
    </location>
</feature>
<feature type="topological domain" description="Cytoplasmic" evidence="4">
    <location>
        <begin position="1"/>
        <end position="35"/>
    </location>
</feature>
<feature type="transmembrane region" description="Helical; Signal-anchor for type II membrane protein" evidence="4">
    <location>
        <begin position="36"/>
        <end position="56"/>
    </location>
</feature>
<feature type="topological domain" description="Extracellular" evidence="4">
    <location>
        <begin position="57"/>
        <end position="233"/>
    </location>
</feature>
<feature type="domain" description="THD" evidence="5">
    <location>
        <begin position="88"/>
        <end position="233"/>
    </location>
</feature>
<feature type="site" description="Cleavage; by SPPL2A or SPPL2B" evidence="1">
    <location>
        <begin position="34"/>
        <end position="35"/>
    </location>
</feature>
<feature type="site" description="Cleavage; by SPPL2A or SPPL2B" evidence="1">
    <location>
        <begin position="39"/>
        <end position="40"/>
    </location>
</feature>
<feature type="site" description="Cleavage; by SPPL2A or SPPL2B" evidence="1">
    <location>
        <begin position="49"/>
        <end position="50"/>
    </location>
</feature>
<feature type="site" description="Cleavage; by SPPL2A or SPPL2B" evidence="1">
    <location>
        <begin position="51"/>
        <end position="52"/>
    </location>
</feature>
<feature type="site" description="Cleavage; by ADAM17" evidence="1">
    <location>
        <begin position="76"/>
        <end position="77"/>
    </location>
</feature>
<feature type="modified residue" description="Phosphoserine; by CK1" evidence="1">
    <location>
        <position position="2"/>
    </location>
</feature>
<feature type="lipid moiety-binding region" description="N6-myristoyl lysine" evidence="2">
    <location>
        <position position="20"/>
    </location>
</feature>
<feature type="glycosylation site" description="O-linked (GalNAc...) serine; in soluble form" evidence="1">
    <location>
        <position position="80"/>
    </location>
</feature>
<feature type="disulfide bond" evidence="5">
    <location>
        <begin position="145"/>
        <end position="177"/>
    </location>
</feature>
<sequence>MSTESMIRDVELAEEALPRKTAGPQGSRRCWFLSLFSFLLVAGATTLFCLLHFGVIGPQREEFPKDPSLISPLAQAVRSSSRTPSDKPVAHVVANPQAEGQLQWLNRRANALLANGVELTDNQLVVPSEGLYLIYSQVLFKGQGCPSNHVLLTHTISRIAVSYQTKVNLLSAIKSPCQRETPEGAEAKPWYEPIYLGGVFQLEKGDRLSAEINLPDYLDFAESGQVYFGIIAL</sequence>
<proteinExistence type="evidence at transcript level"/>
<protein>
    <recommendedName>
        <fullName>Tumor necrosis factor</fullName>
    </recommendedName>
    <alternativeName>
        <fullName>Cachectin</fullName>
    </alternativeName>
    <alternativeName>
        <fullName>TNF-alpha</fullName>
    </alternativeName>
    <alternativeName>
        <fullName>Tumor necrosis factor ligand superfamily member 2</fullName>
        <shortName>TNF-a</shortName>
    </alternativeName>
    <component>
        <recommendedName>
            <fullName>Tumor necrosis factor, membrane form</fullName>
        </recommendedName>
        <alternativeName>
            <fullName>N-terminal fragment</fullName>
            <shortName>NTF</shortName>
        </alternativeName>
    </component>
    <component>
        <recommendedName>
            <fullName>Intracellular domain 1</fullName>
            <shortName>ICD1</shortName>
        </recommendedName>
    </component>
    <component>
        <recommendedName>
            <fullName>Intracellular domain 2</fullName>
            <shortName>ICD2</shortName>
        </recommendedName>
    </component>
    <component>
        <recommendedName>
            <fullName>C-domain 1</fullName>
        </recommendedName>
    </component>
    <component>
        <recommendedName>
            <fullName>C-domain 2</fullName>
        </recommendedName>
    </component>
    <component>
        <recommendedName>
            <fullName>Tumor necrosis factor, soluble form</fullName>
        </recommendedName>
    </component>
</protein>
<accession>P48094</accession>
<accession>Q5TM21</accession>
<accession>Q8HZD6</accession>
<keyword id="KW-1003">Cell membrane</keyword>
<keyword id="KW-0202">Cytokine</keyword>
<keyword id="KW-1015">Disulfide bond</keyword>
<keyword id="KW-0325">Glycoprotein</keyword>
<keyword id="KW-0449">Lipoprotein</keyword>
<keyword id="KW-0472">Membrane</keyword>
<keyword id="KW-0519">Myristate</keyword>
<keyword id="KW-0597">Phosphoprotein</keyword>
<keyword id="KW-1185">Reference proteome</keyword>
<keyword id="KW-0964">Secreted</keyword>
<keyword id="KW-0735">Signal-anchor</keyword>
<keyword id="KW-0812">Transmembrane</keyword>
<keyword id="KW-1133">Transmembrane helix</keyword>
<evidence type="ECO:0000250" key="1"/>
<evidence type="ECO:0000250" key="2">
    <source>
        <dbReference type="UniProtKB" id="P01375"/>
    </source>
</evidence>
<evidence type="ECO:0000250" key="3">
    <source>
        <dbReference type="UniProtKB" id="P06804"/>
    </source>
</evidence>
<evidence type="ECO:0000255" key="4"/>
<evidence type="ECO:0000255" key="5">
    <source>
        <dbReference type="PROSITE-ProRule" id="PRU01387"/>
    </source>
</evidence>
<evidence type="ECO:0000305" key="6"/>
<name>TNFA_MACMU</name>
<comment type="function">
    <text evidence="2 3">Cytokine that binds to TNFRSF1A/TNFR1 and TNFRSF1B/TNFBR. It is mainly secreted by macrophages and can induce cell death of certain tumor cell lines. It is potent pyrogen causing fever by direct action or by stimulation of interleukin-1 secretion and is implicated in the induction of cachexia, Under certain conditions it can stimulate cell proliferation and induce cell differentiation (By similarity). Induces insulin resistance in adipocytes via inhibition of insulin-induced IRS1 tyrosine phosphorylation and insulin-induced glucose uptake. Induces GKAP42 protein degradation in adipocytes which is partially responsible for TNF-induced insulin resistance (By similarity). Plays a role in angiogenesis by inducing VEGF production synergistically with IL1B and IL6 (By similarity). Promotes osteoclastogenesis and therefore mediates bone resorption (By similarity).</text>
</comment>
<comment type="function">
    <text evidence="2">The TNF intracellular domain (ICD) form induces IL12 production in dendritic cells.</text>
</comment>
<comment type="subunit">
    <text evidence="1">Homotrimer. Interacts with SPPL2B (By similarity).</text>
</comment>
<comment type="subcellular location">
    <subcellularLocation>
        <location evidence="1">Cell membrane</location>
        <topology evidence="1">Single-pass type II membrane protein</topology>
    </subcellularLocation>
</comment>
<comment type="subcellular location">
    <molecule>Tumor necrosis factor, membrane form</molecule>
    <subcellularLocation>
        <location evidence="1">Membrane</location>
        <topology evidence="1">Single-pass type II membrane protein</topology>
    </subcellularLocation>
</comment>
<comment type="subcellular location">
    <molecule>Tumor necrosis factor, soluble form</molecule>
    <subcellularLocation>
        <location evidence="1">Secreted</location>
    </subcellularLocation>
</comment>
<comment type="subcellular location">
    <molecule>C-domain 1</molecule>
    <subcellularLocation>
        <location evidence="1">Secreted</location>
    </subcellularLocation>
</comment>
<comment type="subcellular location">
    <molecule>C-domain 2</molecule>
    <subcellularLocation>
        <location evidence="1">Secreted</location>
    </subcellularLocation>
</comment>
<comment type="PTM">
    <text evidence="1">The soluble form derives from the membrane form by proteolytic processing. The membrane-bound form is further proteolytically processed by SPPL2A or SPPL2B through regulated intramembrane proteolysis producing TNF intracellular domains (ICD1 and ICD2) released in the cytosol and TNF C-domain 1 and C-domain 2 secreted into the extracellular space (By similarity).</text>
</comment>
<comment type="PTM">
    <text evidence="1">The membrane form, but not the soluble form, is phosphorylated on serine residues. Dephosphorylation of the membrane form occurs by binding to soluble TNFRSF1A/TNFR1 (By similarity).</text>
</comment>
<comment type="PTM">
    <text evidence="1">O-glycosylated; glycans contain galactose, N-acetylgalactosamine and N-acetylneuraminic acid.</text>
</comment>
<comment type="PTM">
    <molecule>Tumor necrosis factor, soluble form</molecule>
    <text evidence="2">The soluble form is demyristoylated by SIRT6, promoting its secretion.</text>
</comment>
<comment type="similarity">
    <text evidence="6">Belongs to the tumor necrosis factor family.</text>
</comment>
<dbReference type="EMBL" id="U19850">
    <property type="protein sequence ID" value="AAA86712.1"/>
    <property type="molecule type" value="mRNA"/>
</dbReference>
<dbReference type="EMBL" id="AB128049">
    <property type="protein sequence ID" value="BAD69724.1"/>
    <property type="molecule type" value="Genomic_DNA"/>
</dbReference>
<dbReference type="EMBL" id="AY091967">
    <property type="protein sequence ID" value="AAM76585.1"/>
    <property type="molecule type" value="Genomic_DNA"/>
</dbReference>
<dbReference type="RefSeq" id="NP_001040614.1">
    <property type="nucleotide sequence ID" value="NM_001047149.1"/>
</dbReference>
<dbReference type="SMR" id="P48094"/>
<dbReference type="FunCoup" id="P48094">
    <property type="interactions" value="1584"/>
</dbReference>
<dbReference type="STRING" id="9544.ENSMMUP00000056761"/>
<dbReference type="GlyCosmos" id="P48094">
    <property type="glycosylation" value="1 site, No reported glycans"/>
</dbReference>
<dbReference type="PaxDb" id="9544-ENSMMUP00000011594"/>
<dbReference type="ABCD" id="P48094">
    <property type="antibodies" value="11 sequenced antibodies"/>
</dbReference>
<dbReference type="Ensembl" id="ENSMMUT00000056699.2">
    <property type="protein sequence ID" value="ENSMMUP00000056761.1"/>
    <property type="gene ID" value="ENSMMUG00000045654.2"/>
</dbReference>
<dbReference type="GeneID" id="715467"/>
<dbReference type="KEGG" id="mcc:715467"/>
<dbReference type="CTD" id="7124"/>
<dbReference type="VEuPathDB" id="HostDB:ENSMMUG00000045654"/>
<dbReference type="VGNC" id="VGNC:83501">
    <property type="gene designation" value="TNF"/>
</dbReference>
<dbReference type="eggNOG" id="ENOG502S4K8">
    <property type="taxonomic scope" value="Eukaryota"/>
</dbReference>
<dbReference type="GeneTree" id="ENSGT01060000248544"/>
<dbReference type="HOGENOM" id="CLU_070352_3_1_1"/>
<dbReference type="InParanoid" id="P48094"/>
<dbReference type="OMA" id="GATMLFC"/>
<dbReference type="OrthoDB" id="9940698at2759"/>
<dbReference type="TreeFam" id="TF332169"/>
<dbReference type="Proteomes" id="UP000006718">
    <property type="component" value="Chromosome 4"/>
</dbReference>
<dbReference type="Bgee" id="ENSMMUG00000045654">
    <property type="expression patterns" value="Expressed in spleen and 10 other cell types or tissues"/>
</dbReference>
<dbReference type="ExpressionAtlas" id="P48094">
    <property type="expression patterns" value="baseline"/>
</dbReference>
<dbReference type="GO" id="GO:0009897">
    <property type="term" value="C:external side of plasma membrane"/>
    <property type="evidence" value="ECO:0007669"/>
    <property type="project" value="Ensembl"/>
</dbReference>
<dbReference type="GO" id="GO:0005615">
    <property type="term" value="C:extracellular space"/>
    <property type="evidence" value="ECO:0000318"/>
    <property type="project" value="GO_Central"/>
</dbReference>
<dbReference type="GO" id="GO:0045121">
    <property type="term" value="C:membrane raft"/>
    <property type="evidence" value="ECO:0007669"/>
    <property type="project" value="Ensembl"/>
</dbReference>
<dbReference type="GO" id="GO:0001891">
    <property type="term" value="C:phagocytic cup"/>
    <property type="evidence" value="ECO:0007669"/>
    <property type="project" value="Ensembl"/>
</dbReference>
<dbReference type="GO" id="GO:0055037">
    <property type="term" value="C:recycling endosome"/>
    <property type="evidence" value="ECO:0007669"/>
    <property type="project" value="Ensembl"/>
</dbReference>
<dbReference type="GO" id="GO:0005125">
    <property type="term" value="F:cytokine activity"/>
    <property type="evidence" value="ECO:0000318"/>
    <property type="project" value="GO_Central"/>
</dbReference>
<dbReference type="GO" id="GO:0038177">
    <property type="term" value="F:death receptor agonist activity"/>
    <property type="evidence" value="ECO:0007669"/>
    <property type="project" value="Ensembl"/>
</dbReference>
<dbReference type="GO" id="GO:0042802">
    <property type="term" value="F:identical protein binding"/>
    <property type="evidence" value="ECO:0007669"/>
    <property type="project" value="Ensembl"/>
</dbReference>
<dbReference type="GO" id="GO:0002020">
    <property type="term" value="F:protease binding"/>
    <property type="evidence" value="ECO:0007669"/>
    <property type="project" value="Ensembl"/>
</dbReference>
<dbReference type="GO" id="GO:0000976">
    <property type="term" value="F:transcription cis-regulatory region binding"/>
    <property type="evidence" value="ECO:0007669"/>
    <property type="project" value="Ensembl"/>
</dbReference>
<dbReference type="GO" id="GO:0005164">
    <property type="term" value="F:tumor necrosis factor receptor binding"/>
    <property type="evidence" value="ECO:0007669"/>
    <property type="project" value="Ensembl"/>
</dbReference>
<dbReference type="GO" id="GO:0140374">
    <property type="term" value="P:antiviral innate immune response"/>
    <property type="evidence" value="ECO:0007669"/>
    <property type="project" value="Ensembl"/>
</dbReference>
<dbReference type="GO" id="GO:0071230">
    <property type="term" value="P:cellular response to amino acid stimulus"/>
    <property type="evidence" value="ECO:0007669"/>
    <property type="project" value="Ensembl"/>
</dbReference>
<dbReference type="GO" id="GO:0071479">
    <property type="term" value="P:cellular response to ionizing radiation"/>
    <property type="evidence" value="ECO:0007669"/>
    <property type="project" value="Ensembl"/>
</dbReference>
<dbReference type="GO" id="GO:0071222">
    <property type="term" value="P:cellular response to lipopolysaccharide"/>
    <property type="evidence" value="ECO:0007669"/>
    <property type="project" value="Ensembl"/>
</dbReference>
<dbReference type="GO" id="GO:0071316">
    <property type="term" value="P:cellular response to nicotine"/>
    <property type="evidence" value="ECO:0007669"/>
    <property type="project" value="Ensembl"/>
</dbReference>
<dbReference type="GO" id="GO:0071346">
    <property type="term" value="P:cellular response to type II interferon"/>
    <property type="evidence" value="ECO:0007669"/>
    <property type="project" value="Ensembl"/>
</dbReference>
<dbReference type="GO" id="GO:0002439">
    <property type="term" value="P:chronic inflammatory response to antigenic stimulus"/>
    <property type="evidence" value="ECO:0007669"/>
    <property type="project" value="Ensembl"/>
</dbReference>
<dbReference type="GO" id="GO:0050830">
    <property type="term" value="P:defense response to Gram-positive bacterium"/>
    <property type="evidence" value="ECO:0007669"/>
    <property type="project" value="Ensembl"/>
</dbReference>
<dbReference type="GO" id="GO:0048566">
    <property type="term" value="P:embryonic digestive tract development"/>
    <property type="evidence" value="ECO:0007669"/>
    <property type="project" value="Ensembl"/>
</dbReference>
<dbReference type="GO" id="GO:0072577">
    <property type="term" value="P:endothelial cell apoptotic process"/>
    <property type="evidence" value="ECO:0007669"/>
    <property type="project" value="Ensembl"/>
</dbReference>
<dbReference type="GO" id="GO:0060664">
    <property type="term" value="P:epithelial cell proliferation involved in salivary gland morphogenesis"/>
    <property type="evidence" value="ECO:0007669"/>
    <property type="project" value="Ensembl"/>
</dbReference>
<dbReference type="GO" id="GO:0030198">
    <property type="term" value="P:extracellular matrix organization"/>
    <property type="evidence" value="ECO:0007669"/>
    <property type="project" value="Ensembl"/>
</dbReference>
<dbReference type="GO" id="GO:0008625">
    <property type="term" value="P:extrinsic apoptotic signaling pathway via death domain receptors"/>
    <property type="evidence" value="ECO:0000318"/>
    <property type="project" value="GO_Central"/>
</dbReference>
<dbReference type="GO" id="GO:0006006">
    <property type="term" value="P:glucose metabolic process"/>
    <property type="evidence" value="ECO:0007669"/>
    <property type="project" value="Ensembl"/>
</dbReference>
<dbReference type="GO" id="GO:0006959">
    <property type="term" value="P:humoral immune response"/>
    <property type="evidence" value="ECO:0007669"/>
    <property type="project" value="Ensembl"/>
</dbReference>
<dbReference type="GO" id="GO:0006955">
    <property type="term" value="P:immune response"/>
    <property type="evidence" value="ECO:0000318"/>
    <property type="project" value="GO_Central"/>
</dbReference>
<dbReference type="GO" id="GO:0090594">
    <property type="term" value="P:inflammatory response to wounding"/>
    <property type="evidence" value="ECO:0007669"/>
    <property type="project" value="Ensembl"/>
</dbReference>
<dbReference type="GO" id="GO:0008630">
    <property type="term" value="P:intrinsic apoptotic signaling pathway in response to DNA damage"/>
    <property type="evidence" value="ECO:0007669"/>
    <property type="project" value="Ensembl"/>
</dbReference>
<dbReference type="GO" id="GO:0007254">
    <property type="term" value="P:JNK cascade"/>
    <property type="evidence" value="ECO:0007669"/>
    <property type="project" value="Ensembl"/>
</dbReference>
<dbReference type="GO" id="GO:0050901">
    <property type="term" value="P:leukocyte tethering or rolling"/>
    <property type="evidence" value="ECO:0007669"/>
    <property type="project" value="Ensembl"/>
</dbReference>
<dbReference type="GO" id="GO:0002281">
    <property type="term" value="P:macrophage activation involved in immune response"/>
    <property type="evidence" value="ECO:0007669"/>
    <property type="project" value="Ensembl"/>
</dbReference>
<dbReference type="GO" id="GO:0001774">
    <property type="term" value="P:microglial cell activation"/>
    <property type="evidence" value="ECO:0007669"/>
    <property type="project" value="Ensembl"/>
</dbReference>
<dbReference type="GO" id="GO:0097527">
    <property type="term" value="P:necroptotic signaling pathway"/>
    <property type="evidence" value="ECO:0000250"/>
    <property type="project" value="CAFA"/>
</dbReference>
<dbReference type="GO" id="GO:1900222">
    <property type="term" value="P:negative regulation of amyloid-beta clearance"/>
    <property type="evidence" value="ECO:0007669"/>
    <property type="project" value="Ensembl"/>
</dbReference>
<dbReference type="GO" id="GO:1903347">
    <property type="term" value="P:negative regulation of bicellular tight junction assembly"/>
    <property type="evidence" value="ECO:0007669"/>
    <property type="project" value="Ensembl"/>
</dbReference>
<dbReference type="GO" id="GO:0043537">
    <property type="term" value="P:negative regulation of blood vessel endothelial cell migration"/>
    <property type="evidence" value="ECO:0007669"/>
    <property type="project" value="Ensembl"/>
</dbReference>
<dbReference type="GO" id="GO:0061048">
    <property type="term" value="P:negative regulation of branching involved in lung morphogenesis"/>
    <property type="evidence" value="ECO:0007669"/>
    <property type="project" value="Ensembl"/>
</dbReference>
<dbReference type="GO" id="GO:0002719">
    <property type="term" value="P:negative regulation of cytokine production involved in immune response"/>
    <property type="evidence" value="ECO:0007669"/>
    <property type="project" value="Ensembl"/>
</dbReference>
<dbReference type="GO" id="GO:0046325">
    <property type="term" value="P:negative regulation of D-glucose import"/>
    <property type="evidence" value="ECO:0007669"/>
    <property type="project" value="Ensembl"/>
</dbReference>
<dbReference type="GO" id="GO:0001937">
    <property type="term" value="P:negative regulation of endothelial cell proliferation"/>
    <property type="evidence" value="ECO:0007669"/>
    <property type="project" value="Ensembl"/>
</dbReference>
<dbReference type="GO" id="GO:2001240">
    <property type="term" value="P:negative regulation of extrinsic apoptotic signaling pathway in absence of ligand"/>
    <property type="evidence" value="ECO:0007669"/>
    <property type="project" value="Ensembl"/>
</dbReference>
<dbReference type="GO" id="GO:0032715">
    <property type="term" value="P:negative regulation of interleukin-6 production"/>
    <property type="evidence" value="ECO:0007669"/>
    <property type="project" value="Ensembl"/>
</dbReference>
<dbReference type="GO" id="GO:0050995">
    <property type="term" value="P:negative regulation of lipid catabolic process"/>
    <property type="evidence" value="ECO:0007669"/>
    <property type="project" value="Ensembl"/>
</dbReference>
<dbReference type="GO" id="GO:0045930">
    <property type="term" value="P:negative regulation of mitotic cell cycle"/>
    <property type="evidence" value="ECO:0007669"/>
    <property type="project" value="Ensembl"/>
</dbReference>
<dbReference type="GO" id="GO:0045662">
    <property type="term" value="P:negative regulation of myoblast differentiation"/>
    <property type="evidence" value="ECO:0007669"/>
    <property type="project" value="Ensembl"/>
</dbReference>
<dbReference type="GO" id="GO:0045668">
    <property type="term" value="P:negative regulation of osteoblast differentiation"/>
    <property type="evidence" value="ECO:0007669"/>
    <property type="project" value="Ensembl"/>
</dbReference>
<dbReference type="GO" id="GO:0043242">
    <property type="term" value="P:negative regulation of protein-containing complex disassembly"/>
    <property type="evidence" value="ECO:0000250"/>
    <property type="project" value="UniProtKB"/>
</dbReference>
<dbReference type="GO" id="GO:0000122">
    <property type="term" value="P:negative regulation of transcription by RNA polymerase II"/>
    <property type="evidence" value="ECO:0007669"/>
    <property type="project" value="Ensembl"/>
</dbReference>
<dbReference type="GO" id="GO:0061044">
    <property type="term" value="P:negative regulation of vascular wound healing"/>
    <property type="evidence" value="ECO:0007669"/>
    <property type="project" value="Ensembl"/>
</dbReference>
<dbReference type="GO" id="GO:0045071">
    <property type="term" value="P:negative regulation of viral genome replication"/>
    <property type="evidence" value="ECO:0007669"/>
    <property type="project" value="Ensembl"/>
</dbReference>
<dbReference type="GO" id="GO:0030316">
    <property type="term" value="P:osteoclast differentiation"/>
    <property type="evidence" value="ECO:0007669"/>
    <property type="project" value="Ensembl"/>
</dbReference>
<dbReference type="GO" id="GO:0043491">
    <property type="term" value="P:phosphatidylinositol 3-kinase/protein kinase B signal transduction"/>
    <property type="evidence" value="ECO:0007669"/>
    <property type="project" value="Ensembl"/>
</dbReference>
<dbReference type="GO" id="GO:1902004">
    <property type="term" value="P:positive regulation of amyloid-beta formation"/>
    <property type="evidence" value="ECO:0007669"/>
    <property type="project" value="Ensembl"/>
</dbReference>
<dbReference type="GO" id="GO:0043065">
    <property type="term" value="P:positive regulation of apoptotic process"/>
    <property type="evidence" value="ECO:0000250"/>
    <property type="project" value="UniProtKB"/>
</dbReference>
<dbReference type="GO" id="GO:2000334">
    <property type="term" value="P:positive regulation of blood microparticle formation"/>
    <property type="evidence" value="ECO:0007669"/>
    <property type="project" value="Ensembl"/>
</dbReference>
<dbReference type="GO" id="GO:0070886">
    <property type="term" value="P:positive regulation of calcineurin-NFAT signaling cascade"/>
    <property type="evidence" value="ECO:0007669"/>
    <property type="project" value="Ensembl"/>
</dbReference>
<dbReference type="GO" id="GO:0043123">
    <property type="term" value="P:positive regulation of canonical NF-kappaB signal transduction"/>
    <property type="evidence" value="ECO:0000318"/>
    <property type="project" value="GO_Central"/>
</dbReference>
<dbReference type="GO" id="GO:2000343">
    <property type="term" value="P:positive regulation of chemokine (C-X-C motif) ligand 2 production"/>
    <property type="evidence" value="ECO:0007669"/>
    <property type="project" value="Ensembl"/>
</dbReference>
<dbReference type="GO" id="GO:0002876">
    <property type="term" value="P:positive regulation of chronic inflammatory response to antigenic stimulus"/>
    <property type="evidence" value="ECO:0007669"/>
    <property type="project" value="Ensembl"/>
</dbReference>
<dbReference type="GO" id="GO:1900017">
    <property type="term" value="P:positive regulation of cytokine production involved in inflammatory response"/>
    <property type="evidence" value="ECO:0007669"/>
    <property type="project" value="Ensembl"/>
</dbReference>
<dbReference type="GO" id="GO:2001238">
    <property type="term" value="P:positive regulation of extrinsic apoptotic signaling pathway"/>
    <property type="evidence" value="ECO:0000318"/>
    <property type="project" value="GO_Central"/>
</dbReference>
<dbReference type="GO" id="GO:0031622">
    <property type="term" value="P:positive regulation of fever generation"/>
    <property type="evidence" value="ECO:0007669"/>
    <property type="project" value="Ensembl"/>
</dbReference>
<dbReference type="GO" id="GO:0060252">
    <property type="term" value="P:positive regulation of glial cell proliferation"/>
    <property type="evidence" value="ECO:0007669"/>
    <property type="project" value="Ensembl"/>
</dbReference>
<dbReference type="GO" id="GO:0051798">
    <property type="term" value="P:positive regulation of hair follicle development"/>
    <property type="evidence" value="ECO:0007669"/>
    <property type="project" value="Ensembl"/>
</dbReference>
<dbReference type="GO" id="GO:0034116">
    <property type="term" value="P:positive regulation of heterotypic cell-cell adhesion"/>
    <property type="evidence" value="ECO:0007669"/>
    <property type="project" value="Ensembl"/>
</dbReference>
<dbReference type="GO" id="GO:0002925">
    <property type="term" value="P:positive regulation of humoral immune response mediated by circulating immunoglobulin"/>
    <property type="evidence" value="ECO:0007669"/>
    <property type="project" value="Ensembl"/>
</dbReference>
<dbReference type="GO" id="GO:0032731">
    <property type="term" value="P:positive regulation of interleukin-1 beta production"/>
    <property type="evidence" value="ECO:0007669"/>
    <property type="project" value="Ensembl"/>
</dbReference>
<dbReference type="GO" id="GO:0150129">
    <property type="term" value="P:positive regulation of interleukin-33 production"/>
    <property type="evidence" value="ECO:0007669"/>
    <property type="project" value="Ensembl"/>
</dbReference>
<dbReference type="GO" id="GO:0032755">
    <property type="term" value="P:positive regulation of interleukin-6 production"/>
    <property type="evidence" value="ECO:0007669"/>
    <property type="project" value="Ensembl"/>
</dbReference>
<dbReference type="GO" id="GO:0032757">
    <property type="term" value="P:positive regulation of interleukin-8 production"/>
    <property type="evidence" value="ECO:0007669"/>
    <property type="project" value="Ensembl"/>
</dbReference>
<dbReference type="GO" id="GO:0046330">
    <property type="term" value="P:positive regulation of JNK cascade"/>
    <property type="evidence" value="ECO:0007669"/>
    <property type="project" value="Ensembl"/>
</dbReference>
<dbReference type="GO" id="GO:0043507">
    <property type="term" value="P:positive regulation of JUN kinase activity"/>
    <property type="evidence" value="ECO:0000250"/>
    <property type="project" value="UniProtKB"/>
</dbReference>
<dbReference type="GO" id="GO:1904999">
    <property type="term" value="P:positive regulation of leukocyte adhesion to arterial endothelial cell"/>
    <property type="evidence" value="ECO:0007669"/>
    <property type="project" value="Ensembl"/>
</dbReference>
<dbReference type="GO" id="GO:0010744">
    <property type="term" value="P:positive regulation of macrophage derived foam cell differentiation"/>
    <property type="evidence" value="ECO:0007669"/>
    <property type="project" value="Ensembl"/>
</dbReference>
<dbReference type="GO" id="GO:0043406">
    <property type="term" value="P:positive regulation of MAP kinase activity"/>
    <property type="evidence" value="ECO:0000250"/>
    <property type="project" value="UniProtKB"/>
</dbReference>
<dbReference type="GO" id="GO:0051044">
    <property type="term" value="P:positive regulation of membrane protein ectodomain proteolysis"/>
    <property type="evidence" value="ECO:0007669"/>
    <property type="project" value="Ensembl"/>
</dbReference>
<dbReference type="GO" id="GO:1902895">
    <property type="term" value="P:positive regulation of miRNA transcription"/>
    <property type="evidence" value="ECO:0007669"/>
    <property type="project" value="Ensembl"/>
</dbReference>
<dbReference type="GO" id="GO:0043525">
    <property type="term" value="P:positive regulation of neuron apoptotic process"/>
    <property type="evidence" value="ECO:0007669"/>
    <property type="project" value="Ensembl"/>
</dbReference>
<dbReference type="GO" id="GO:0051092">
    <property type="term" value="P:positive regulation of NF-kappaB transcription factor activity"/>
    <property type="evidence" value="ECO:0000250"/>
    <property type="project" value="UniProtKB"/>
</dbReference>
<dbReference type="GO" id="GO:0045429">
    <property type="term" value="P:positive regulation of nitric oxide biosynthetic process"/>
    <property type="evidence" value="ECO:0007669"/>
    <property type="project" value="Ensembl"/>
</dbReference>
<dbReference type="GO" id="GO:1901224">
    <property type="term" value="P:positive regulation of non-canonical NF-kappaB signal transduction"/>
    <property type="evidence" value="ECO:0007669"/>
    <property type="project" value="Ensembl"/>
</dbReference>
<dbReference type="GO" id="GO:0045672">
    <property type="term" value="P:positive regulation of osteoclast differentiation"/>
    <property type="evidence" value="ECO:0007669"/>
    <property type="project" value="Ensembl"/>
</dbReference>
<dbReference type="GO" id="GO:0051897">
    <property type="term" value="P:positive regulation of phosphatidylinositol 3-kinase/protein kinase B signal transduction"/>
    <property type="evidence" value="ECO:0007669"/>
    <property type="project" value="Ensembl"/>
</dbReference>
<dbReference type="GO" id="GO:0071803">
    <property type="term" value="P:positive regulation of podosome assembly"/>
    <property type="evidence" value="ECO:0007669"/>
    <property type="project" value="Ensembl"/>
</dbReference>
<dbReference type="GO" id="GO:2000010">
    <property type="term" value="P:positive regulation of protein localization to cell surface"/>
    <property type="evidence" value="ECO:0007669"/>
    <property type="project" value="Ensembl"/>
</dbReference>
<dbReference type="GO" id="GO:1903078">
    <property type="term" value="P:positive regulation of protein localization to plasma membrane"/>
    <property type="evidence" value="ECO:0007669"/>
    <property type="project" value="Ensembl"/>
</dbReference>
<dbReference type="GO" id="GO:0001934">
    <property type="term" value="P:positive regulation of protein phosphorylation"/>
    <property type="evidence" value="ECO:0000250"/>
    <property type="project" value="UniProtKB"/>
</dbReference>
<dbReference type="GO" id="GO:0051222">
    <property type="term" value="P:positive regulation of protein transport"/>
    <property type="evidence" value="ECO:0007669"/>
    <property type="project" value="Ensembl"/>
</dbReference>
<dbReference type="GO" id="GO:0043243">
    <property type="term" value="P:positive regulation of protein-containing complex disassembly"/>
    <property type="evidence" value="ECO:0000250"/>
    <property type="project" value="UniProtKB"/>
</dbReference>
<dbReference type="GO" id="GO:0050806">
    <property type="term" value="P:positive regulation of synaptic transmission"/>
    <property type="evidence" value="ECO:0007669"/>
    <property type="project" value="Ensembl"/>
</dbReference>
<dbReference type="GO" id="GO:1901647">
    <property type="term" value="P:positive regulation of synoviocyte proliferation"/>
    <property type="evidence" value="ECO:0007669"/>
    <property type="project" value="Ensembl"/>
</dbReference>
<dbReference type="GO" id="GO:0045944">
    <property type="term" value="P:positive regulation of transcription by RNA polymerase II"/>
    <property type="evidence" value="ECO:0007669"/>
    <property type="project" value="Ensembl"/>
</dbReference>
<dbReference type="GO" id="GO:0045994">
    <property type="term" value="P:positive regulation of translational initiation by iron"/>
    <property type="evidence" value="ECO:0007669"/>
    <property type="project" value="Ensembl"/>
</dbReference>
<dbReference type="GO" id="GO:0032729">
    <property type="term" value="P:positive regulation of type II interferon production"/>
    <property type="evidence" value="ECO:0007669"/>
    <property type="project" value="Ensembl"/>
</dbReference>
<dbReference type="GO" id="GO:1904707">
    <property type="term" value="P:positive regulation of vascular associated smooth muscle cell proliferation"/>
    <property type="evidence" value="ECO:0007669"/>
    <property type="project" value="Ensembl"/>
</dbReference>
<dbReference type="GO" id="GO:0060557">
    <property type="term" value="P:positive regulation of vitamin D biosynthetic process"/>
    <property type="evidence" value="ECO:0007669"/>
    <property type="project" value="Ensembl"/>
</dbReference>
<dbReference type="GO" id="GO:0072659">
    <property type="term" value="P:protein localization to plasma membrane"/>
    <property type="evidence" value="ECO:0007669"/>
    <property type="project" value="Ensembl"/>
</dbReference>
<dbReference type="GO" id="GO:0060693">
    <property type="term" value="P:regulation of branching involved in salivary gland morphogenesis"/>
    <property type="evidence" value="ECO:0007669"/>
    <property type="project" value="Ensembl"/>
</dbReference>
<dbReference type="GO" id="GO:2000351">
    <property type="term" value="P:regulation of endothelial cell apoptotic process"/>
    <property type="evidence" value="ECO:0007669"/>
    <property type="project" value="Ensembl"/>
</dbReference>
<dbReference type="GO" id="GO:1903140">
    <property type="term" value="P:regulation of establishment of endothelial barrier"/>
    <property type="evidence" value="ECO:0007669"/>
    <property type="project" value="Ensembl"/>
</dbReference>
<dbReference type="GO" id="GO:0002637">
    <property type="term" value="P:regulation of immunoglobulin production"/>
    <property type="evidence" value="ECO:0007669"/>
    <property type="project" value="Ensembl"/>
</dbReference>
<dbReference type="GO" id="GO:0050796">
    <property type="term" value="P:regulation of insulin secretion"/>
    <property type="evidence" value="ECO:0007669"/>
    <property type="project" value="Ensembl"/>
</dbReference>
<dbReference type="GO" id="GO:1905038">
    <property type="term" value="P:regulation of membrane lipid metabolic process"/>
    <property type="evidence" value="ECO:0007669"/>
    <property type="project" value="Ensembl"/>
</dbReference>
<dbReference type="GO" id="GO:2000377">
    <property type="term" value="P:regulation of reactive oxygen species metabolic process"/>
    <property type="evidence" value="ECO:0007669"/>
    <property type="project" value="Ensembl"/>
</dbReference>
<dbReference type="GO" id="GO:0050807">
    <property type="term" value="P:regulation of synapse organization"/>
    <property type="evidence" value="ECO:0007669"/>
    <property type="project" value="Ensembl"/>
</dbReference>
<dbReference type="GO" id="GO:0051384">
    <property type="term" value="P:response to glucocorticoid"/>
    <property type="evidence" value="ECO:0007669"/>
    <property type="project" value="Ensembl"/>
</dbReference>
<dbReference type="GO" id="GO:0033209">
    <property type="term" value="P:tumor necrosis factor-mediated signaling pathway"/>
    <property type="evidence" value="ECO:0000318"/>
    <property type="project" value="GO_Central"/>
</dbReference>
<dbReference type="GO" id="GO:0010573">
    <property type="term" value="P:vascular endothelial growth factor production"/>
    <property type="evidence" value="ECO:0000250"/>
    <property type="project" value="UniProtKB"/>
</dbReference>
<dbReference type="CDD" id="cd00184">
    <property type="entry name" value="TNF"/>
    <property type="match status" value="1"/>
</dbReference>
<dbReference type="FunFam" id="2.60.120.40:FF:000007">
    <property type="entry name" value="Tumor necrosis factor"/>
    <property type="match status" value="1"/>
</dbReference>
<dbReference type="Gene3D" id="2.60.120.40">
    <property type="match status" value="1"/>
</dbReference>
<dbReference type="InterPro" id="IPR006053">
    <property type="entry name" value="TNF"/>
</dbReference>
<dbReference type="InterPro" id="IPR002959">
    <property type="entry name" value="TNF_alpha"/>
</dbReference>
<dbReference type="InterPro" id="IPR021184">
    <property type="entry name" value="TNF_CS"/>
</dbReference>
<dbReference type="InterPro" id="IPR006052">
    <property type="entry name" value="TNF_dom"/>
</dbReference>
<dbReference type="InterPro" id="IPR008983">
    <property type="entry name" value="Tumour_necrosis_fac-like_dom"/>
</dbReference>
<dbReference type="PANTHER" id="PTHR11471:SF23">
    <property type="entry name" value="TUMOR NECROSIS FACTOR"/>
    <property type="match status" value="1"/>
</dbReference>
<dbReference type="PANTHER" id="PTHR11471">
    <property type="entry name" value="TUMOR NECROSIS FACTOR FAMILY MEMBER"/>
    <property type="match status" value="1"/>
</dbReference>
<dbReference type="Pfam" id="PF00229">
    <property type="entry name" value="TNF"/>
    <property type="match status" value="1"/>
</dbReference>
<dbReference type="PRINTS" id="PR01234">
    <property type="entry name" value="TNECROSISFCT"/>
</dbReference>
<dbReference type="PRINTS" id="PR01235">
    <property type="entry name" value="TNFALPHA"/>
</dbReference>
<dbReference type="SMART" id="SM00207">
    <property type="entry name" value="TNF"/>
    <property type="match status" value="1"/>
</dbReference>
<dbReference type="SUPFAM" id="SSF49842">
    <property type="entry name" value="TNF-like"/>
    <property type="match status" value="1"/>
</dbReference>
<dbReference type="PROSITE" id="PS00251">
    <property type="entry name" value="THD_1"/>
    <property type="match status" value="1"/>
</dbReference>
<dbReference type="PROSITE" id="PS50049">
    <property type="entry name" value="THD_2"/>
    <property type="match status" value="1"/>
</dbReference>
<gene>
    <name type="primary">TNF</name>
    <name type="synonym">TNFA</name>
    <name type="synonym">TNFSF2</name>
</gene>